<name>RD20_PHYIT</name>
<organism>
    <name type="scientific">Phytophthora infestans (strain T30-4)</name>
    <name type="common">Potato late blight agent</name>
    <dbReference type="NCBI Taxonomy" id="403677"/>
    <lineage>
        <taxon>Eukaryota</taxon>
        <taxon>Sar</taxon>
        <taxon>Stramenopiles</taxon>
        <taxon>Oomycota</taxon>
        <taxon>Peronosporales</taxon>
        <taxon>Peronosporaceae</taxon>
        <taxon>Phytophthora</taxon>
    </lineage>
</organism>
<dbReference type="EMBL" id="DS028122">
    <property type="protein sequence ID" value="EEY67331.1"/>
    <property type="molecule type" value="Genomic_DNA"/>
</dbReference>
<dbReference type="RefSeq" id="XP_002905979.1">
    <property type="nucleotide sequence ID" value="XM_002905933.1"/>
</dbReference>
<dbReference type="SMR" id="D0N118"/>
<dbReference type="EnsemblProtists" id="PITG_04339T0">
    <property type="protein sequence ID" value="PITG_04339T0"/>
    <property type="gene ID" value="PITG_04339"/>
</dbReference>
<dbReference type="GeneID" id="9480016"/>
<dbReference type="KEGG" id="pif:PITG_04339"/>
<dbReference type="VEuPathDB" id="FungiDB:PITG_04339"/>
<dbReference type="eggNOG" id="ENOG502RGI6">
    <property type="taxonomic scope" value="Eukaryota"/>
</dbReference>
<dbReference type="HOGENOM" id="CLU_1071978_0_0_1"/>
<dbReference type="InParanoid" id="D0N118"/>
<dbReference type="OMA" id="EERAYKP"/>
<dbReference type="OrthoDB" id="128293at2759"/>
<dbReference type="Proteomes" id="UP000006643">
    <property type="component" value="Partially assembled WGS sequence"/>
</dbReference>
<dbReference type="GO" id="GO:0005576">
    <property type="term" value="C:extracellular region"/>
    <property type="evidence" value="ECO:0007669"/>
    <property type="project" value="UniProtKB-SubCell"/>
</dbReference>
<dbReference type="GO" id="GO:0030430">
    <property type="term" value="C:host cell cytoplasm"/>
    <property type="evidence" value="ECO:0007669"/>
    <property type="project" value="UniProtKB-SubCell"/>
</dbReference>
<dbReference type="GO" id="GO:0044196">
    <property type="term" value="C:host cell nucleolus"/>
    <property type="evidence" value="ECO:0007669"/>
    <property type="project" value="UniProtKB-SubCell"/>
</dbReference>
<evidence type="ECO:0000255" key="1"/>
<evidence type="ECO:0000269" key="2">
    <source>
    </source>
</evidence>
<evidence type="ECO:0000269" key="3">
    <source>
    </source>
</evidence>
<evidence type="ECO:0000269" key="4">
    <source>
    </source>
</evidence>
<evidence type="ECO:0000269" key="5">
    <source>
    </source>
</evidence>
<evidence type="ECO:0000269" key="6">
    <source>
    </source>
</evidence>
<evidence type="ECO:0000303" key="7">
    <source>
    </source>
</evidence>
<evidence type="ECO:0000305" key="8"/>
<evidence type="ECO:0000305" key="9">
    <source>
    </source>
</evidence>
<sequence>MRCHYFVLLAVAAFLAGANVAVATTDAQLSDARAVRASFNTKRALRSHTKATDHGEERAYKPSLSVVESLNNWMQRASKNILPDDVILVMASKAMTKKTSSSDAVFAMLQLDQGLKGILSNPNLKQFAYYLVLTEKAPSQALITKLISQYGDDVVAKYLFDIKHKAINVSEKLKAEARFWQGAQYVKWFDEGVTPALVRQKYNVHPETWYKNPYEGVYWEYTGVYAKLASKSNKPLPVEV</sequence>
<feature type="signal peptide" evidence="1">
    <location>
        <begin position="1"/>
        <end position="23"/>
    </location>
</feature>
<feature type="chain" id="PRO_5003011927" description="RxLR effector protein PexRD20">
    <location>
        <begin position="24"/>
        <end position="240"/>
    </location>
</feature>
<feature type="short sequence motif" description="RxLR-dEER" evidence="9">
    <location>
        <begin position="43"/>
        <end position="58"/>
    </location>
</feature>
<keyword id="KW-1035">Host cytoplasm</keyword>
<keyword id="KW-1048">Host nucleus</keyword>
<keyword id="KW-1185">Reference proteome</keyword>
<keyword id="KW-0964">Secreted</keyword>
<keyword id="KW-0732">Signal</keyword>
<keyword id="KW-0843">Virulence</keyword>
<reference key="1">
    <citation type="journal article" date="2009" name="Nature">
        <title>Genome sequence and analysis of the Irish potato famine pathogen Phytophthora infestans.</title>
        <authorList>
            <consortium name="The Broad Institute Genome Sequencing Platform"/>
            <person name="Haas B.J."/>
            <person name="Kamoun S."/>
            <person name="Zody M.C."/>
            <person name="Jiang R.H."/>
            <person name="Handsaker R.E."/>
            <person name="Cano L.M."/>
            <person name="Grabherr M."/>
            <person name="Kodira C.D."/>
            <person name="Raffaele S."/>
            <person name="Torto-Alalibo T."/>
            <person name="Bozkurt T.O."/>
            <person name="Ah-Fong A.M."/>
            <person name="Alvarado L."/>
            <person name="Anderson V.L."/>
            <person name="Armstrong M.R."/>
            <person name="Avrova A."/>
            <person name="Baxter L."/>
            <person name="Beynon J."/>
            <person name="Boevink P.C."/>
            <person name="Bollmann S.R."/>
            <person name="Bos J.I."/>
            <person name="Bulone V."/>
            <person name="Cai G."/>
            <person name="Cakir C."/>
            <person name="Carrington J.C."/>
            <person name="Chawner M."/>
            <person name="Conti L."/>
            <person name="Costanzo S."/>
            <person name="Ewan R."/>
            <person name="Fahlgren N."/>
            <person name="Fischbach M.A."/>
            <person name="Fugelstad J."/>
            <person name="Gilroy E.M."/>
            <person name="Gnerre S."/>
            <person name="Green P.J."/>
            <person name="Grenville-Briggs L.J."/>
            <person name="Griffith J."/>
            <person name="Grunwald N.J."/>
            <person name="Horn K."/>
            <person name="Horner N.R."/>
            <person name="Hu C.H."/>
            <person name="Huitema E."/>
            <person name="Jeong D.H."/>
            <person name="Jones A.M."/>
            <person name="Jones J.D."/>
            <person name="Jones R.W."/>
            <person name="Karlsson E.K."/>
            <person name="Kunjeti S.G."/>
            <person name="Lamour K."/>
            <person name="Liu Z."/>
            <person name="Ma L."/>
            <person name="Maclean D."/>
            <person name="Chibucos M.C."/>
            <person name="McDonald H."/>
            <person name="McWalters J."/>
            <person name="Meijer H.J."/>
            <person name="Morgan W."/>
            <person name="Morris P.F."/>
            <person name="Munro C.A."/>
            <person name="O'Neill K."/>
            <person name="Ospina-Giraldo M."/>
            <person name="Pinzon A."/>
            <person name="Pritchard L."/>
            <person name="Ramsahoye B."/>
            <person name="Ren Q."/>
            <person name="Restrepo S."/>
            <person name="Roy S."/>
            <person name="Sadanandom A."/>
            <person name="Savidor A."/>
            <person name="Schornack S."/>
            <person name="Schwartz D.C."/>
            <person name="Schumann U.D."/>
            <person name="Schwessinger B."/>
            <person name="Seyer L."/>
            <person name="Sharpe T."/>
            <person name="Silvar C."/>
            <person name="Song J."/>
            <person name="Studholme D.J."/>
            <person name="Sykes S."/>
            <person name="Thines M."/>
            <person name="van de Vondervoort P.J."/>
            <person name="Phuntumart V."/>
            <person name="Wawra S."/>
            <person name="Weide R."/>
            <person name="Win J."/>
            <person name="Young C."/>
            <person name="Zhou S."/>
            <person name="Fry W."/>
            <person name="Meyers B.C."/>
            <person name="van West P."/>
            <person name="Ristaino J."/>
            <person name="Govers F."/>
            <person name="Birch P.R."/>
            <person name="Whisson S.C."/>
            <person name="Judelson H.S."/>
            <person name="Nusbaum C."/>
        </authorList>
    </citation>
    <scope>NUCLEOTIDE SEQUENCE [LARGE SCALE GENOMIC DNA]</scope>
    <source>
        <strain>T30-4</strain>
    </source>
</reference>
<reference key="2">
    <citation type="journal article" date="2007" name="Nature">
        <title>A translocation signal for delivery of oomycete effector proteins into host plant cells.</title>
        <authorList>
            <person name="Whisson S.C."/>
            <person name="Boevink P.C."/>
            <person name="Moleleki L."/>
            <person name="Avrova A.O."/>
            <person name="Morales J.G."/>
            <person name="Gilroy E.M."/>
            <person name="Armstrong M.R."/>
            <person name="Grouffaud S."/>
            <person name="van West P."/>
            <person name="Chapman S."/>
            <person name="Hein I."/>
            <person name="Toth I.K."/>
            <person name="Pritchard L."/>
            <person name="Birch P.R."/>
        </authorList>
    </citation>
    <scope>INDUCTION</scope>
    <scope>DOMAIN</scope>
</reference>
<reference key="3">
    <citation type="journal article" date="2009" name="Plant Cell">
        <title>In planta expression screens of Phytophthora infestans RXLR effectors reveal diverse phenotypes, including activation of the Solanum bulbocastanum disease resistance protein Rpi-blb2.</title>
        <authorList>
            <person name="Oh S.K."/>
            <person name="Young C."/>
            <person name="Lee M."/>
            <person name="Oliva R."/>
            <person name="Bozkurt T.O."/>
            <person name="Cano L.M."/>
            <person name="Win J."/>
            <person name="Bos J.I."/>
            <person name="Liu H.Y."/>
            <person name="van Damme M."/>
            <person name="Morgan W."/>
            <person name="Choi D."/>
            <person name="Van der Vossen E.A."/>
            <person name="Vleeshouwers V.G."/>
            <person name="Kamoun S."/>
        </authorList>
    </citation>
    <scope>INDUCTION</scope>
</reference>
<reference key="4">
    <citation type="journal article" date="2017" name="BMC Genomics">
        <title>RNA-seq of life stages of the oomycete Phytophthora infestans reveals dynamic changes in metabolic, signal transduction, and pathogenesis genes and a major role for calcium signaling in development.</title>
        <authorList>
            <person name="Ah-Fong A.M."/>
            <person name="Kim K.S."/>
            <person name="Judelson H.S."/>
        </authorList>
    </citation>
    <scope>INDUCTION</scope>
</reference>
<reference key="5">
    <citation type="journal article" date="2017" name="Front. Plant Sci.">
        <title>Conserved RXLR effector genes of Phytophthora infestans expressed at the early stage of potato infection are suppressive to host defense.</title>
        <authorList>
            <person name="Yin J."/>
            <person name="Gu B."/>
            <person name="Huang G."/>
            <person name="Tian Y."/>
            <person name="Quan J."/>
            <person name="Lindqvist-Kreuze H."/>
            <person name="Shan W."/>
        </authorList>
    </citation>
    <scope>INDUCTION</scope>
</reference>
<reference key="6">
    <citation type="journal article" date="2019" name="J. Exp. Bot.">
        <title>Phytophthora infestans RXLR effectors act in concert at diverse subcellular locations to enhance host colonization.</title>
        <authorList>
            <person name="Wang S."/>
            <person name="McLellan H."/>
            <person name="Bukharova T."/>
            <person name="He Q."/>
            <person name="Murphy F."/>
            <person name="Shi J."/>
            <person name="Sun S."/>
            <person name="van Weymers P."/>
            <person name="Ren Y."/>
            <person name="Thilliez G."/>
            <person name="Wang H."/>
            <person name="Chen X."/>
            <person name="Engelhardt S."/>
            <person name="Vleeshouwers V."/>
            <person name="Gilroy E.M."/>
            <person name="Whisson S.C."/>
            <person name="Hein I."/>
            <person name="Wang X."/>
            <person name="Tian Z."/>
            <person name="Birch P.R.J."/>
            <person name="Boevink P.C."/>
        </authorList>
    </citation>
    <scope>FUNCTION</scope>
    <scope>SUBCELLULAR LOCATION</scope>
</reference>
<proteinExistence type="evidence at transcript level"/>
<protein>
    <recommendedName>
        <fullName evidence="7">RxLR effector protein PexRD20</fullName>
    </recommendedName>
</protein>
<accession>D0N118</accession>
<comment type="function">
    <text evidence="6">Effector that enhances P.infestans colonization of Nicotiana benthamiana leaves.</text>
</comment>
<comment type="subcellular location">
    <subcellularLocation>
        <location evidence="6">Secreted</location>
    </subcellularLocation>
    <subcellularLocation>
        <location evidence="6">Host cytoplasm</location>
    </subcellularLocation>
    <subcellularLocation>
        <location evidence="6">Host nucleus</location>
    </subcellularLocation>
    <subcellularLocation>
        <location evidence="6">Host nucleus</location>
        <location evidence="6">Host nucleolus</location>
    </subcellularLocation>
</comment>
<comment type="induction">
    <text evidence="2 3 4 5">Expression is induced during host plant infection.</text>
</comment>
<comment type="domain">
    <text evidence="9">The RxLR-dEER motif acts to carry the protein into the host cell cytoplasm through binding to cell surface phosphatidylinositol-3-phosphate.</text>
</comment>
<comment type="similarity">
    <text evidence="8">Belongs to the RxLR effector family.</text>
</comment>
<gene>
    <name evidence="7" type="primary">PexRD20</name>
    <name type="ORF">PITG_04339</name>
</gene>